<name>CMOA_PSESM</name>
<dbReference type="EC" id="2.1.3.-" evidence="1"/>
<dbReference type="EMBL" id="AE016853">
    <property type="protein sequence ID" value="AAO57668.1"/>
    <property type="molecule type" value="Genomic_DNA"/>
</dbReference>
<dbReference type="RefSeq" id="NP_793973.1">
    <property type="nucleotide sequence ID" value="NC_004578.1"/>
</dbReference>
<dbReference type="RefSeq" id="WP_005764772.1">
    <property type="nucleotide sequence ID" value="NC_004578.1"/>
</dbReference>
<dbReference type="SMR" id="Q87XG6"/>
<dbReference type="STRING" id="223283.PSPTO_4212"/>
<dbReference type="DNASU" id="1185892"/>
<dbReference type="GeneID" id="1185892"/>
<dbReference type="KEGG" id="pst:PSPTO_4212"/>
<dbReference type="PATRIC" id="fig|223283.9.peg.4319"/>
<dbReference type="eggNOG" id="COG2226">
    <property type="taxonomic scope" value="Bacteria"/>
</dbReference>
<dbReference type="HOGENOM" id="CLU_078475_0_0_6"/>
<dbReference type="OrthoDB" id="9779941at2"/>
<dbReference type="PhylomeDB" id="Q87XG6"/>
<dbReference type="Proteomes" id="UP000002515">
    <property type="component" value="Chromosome"/>
</dbReference>
<dbReference type="GO" id="GO:0016743">
    <property type="term" value="F:carboxyl- or carbamoyltransferase activity"/>
    <property type="evidence" value="ECO:0007669"/>
    <property type="project" value="UniProtKB-UniRule"/>
</dbReference>
<dbReference type="GO" id="GO:1904047">
    <property type="term" value="F:S-adenosyl-L-methionine binding"/>
    <property type="evidence" value="ECO:0007669"/>
    <property type="project" value="UniProtKB-UniRule"/>
</dbReference>
<dbReference type="GO" id="GO:0002098">
    <property type="term" value="P:tRNA wobble uridine modification"/>
    <property type="evidence" value="ECO:0007669"/>
    <property type="project" value="InterPro"/>
</dbReference>
<dbReference type="CDD" id="cd02440">
    <property type="entry name" value="AdoMet_MTases"/>
    <property type="match status" value="1"/>
</dbReference>
<dbReference type="Gene3D" id="3.40.50.150">
    <property type="entry name" value="Vaccinia Virus protein VP39"/>
    <property type="match status" value="1"/>
</dbReference>
<dbReference type="HAMAP" id="MF_01589">
    <property type="entry name" value="Cx_SAM_synthase"/>
    <property type="match status" value="1"/>
</dbReference>
<dbReference type="InterPro" id="IPR005271">
    <property type="entry name" value="CmoA"/>
</dbReference>
<dbReference type="InterPro" id="IPR041698">
    <property type="entry name" value="Methyltransf_25"/>
</dbReference>
<dbReference type="InterPro" id="IPR029063">
    <property type="entry name" value="SAM-dependent_MTases_sf"/>
</dbReference>
<dbReference type="NCBIfam" id="TIGR00740">
    <property type="entry name" value="carboxy-S-adenosyl-L-methionine synthase CmoA"/>
    <property type="match status" value="1"/>
</dbReference>
<dbReference type="NCBIfam" id="NF011995">
    <property type="entry name" value="PRK15451.1"/>
    <property type="match status" value="1"/>
</dbReference>
<dbReference type="PANTHER" id="PTHR43861:SF2">
    <property type="entry name" value="CARBOXY-S-ADENOSYL-L-METHIONINE SYNTHASE"/>
    <property type="match status" value="1"/>
</dbReference>
<dbReference type="PANTHER" id="PTHR43861">
    <property type="entry name" value="TRANS-ACONITATE 2-METHYLTRANSFERASE-RELATED"/>
    <property type="match status" value="1"/>
</dbReference>
<dbReference type="Pfam" id="PF13649">
    <property type="entry name" value="Methyltransf_25"/>
    <property type="match status" value="1"/>
</dbReference>
<dbReference type="PIRSF" id="PIRSF006325">
    <property type="entry name" value="MeTrfase_bac"/>
    <property type="match status" value="1"/>
</dbReference>
<dbReference type="SUPFAM" id="SSF53335">
    <property type="entry name" value="S-adenosyl-L-methionine-dependent methyltransferases"/>
    <property type="match status" value="1"/>
</dbReference>
<sequence>MSKEPDRLFAQPLPQVPDFAFNEDVVRVFPDMIKRSVPGYPAIVENLGVLAAQFAQPDTVLYDLGCSLGAVTQALRRHVRSDGCEVIAIDNSTAMVERCREYLNAQNSMFQELLPVQVIEGDILALAFKPASVVALNFTLQFVAPEQRLALLGRIRGALVPGGALILSEKLRFNDEQEHALLTDLHIAFKRANGYSDLEIAQKRSAIENVMKPDSLEEHRQRLLAAGFSKVVPWFQCLNFASLIALP</sequence>
<comment type="function">
    <text evidence="1">Catalyzes the conversion of S-adenosyl-L-methionine (SAM) to carboxy-S-adenosyl-L-methionine (Cx-SAM).</text>
</comment>
<comment type="catalytic activity">
    <reaction evidence="1">
        <text>prephenate + S-adenosyl-L-methionine = carboxy-S-adenosyl-L-methionine + 3-phenylpyruvate + H2O</text>
        <dbReference type="Rhea" id="RHEA:51692"/>
        <dbReference type="ChEBI" id="CHEBI:15377"/>
        <dbReference type="ChEBI" id="CHEBI:18005"/>
        <dbReference type="ChEBI" id="CHEBI:29934"/>
        <dbReference type="ChEBI" id="CHEBI:59789"/>
        <dbReference type="ChEBI" id="CHEBI:134278"/>
    </reaction>
</comment>
<comment type="subunit">
    <text evidence="1">Homodimer.</text>
</comment>
<comment type="similarity">
    <text evidence="1">Belongs to the class I-like SAM-binding methyltransferase superfamily. Cx-SAM synthase family.</text>
</comment>
<keyword id="KW-1185">Reference proteome</keyword>
<keyword id="KW-0949">S-adenosyl-L-methionine</keyword>
<keyword id="KW-0808">Transferase</keyword>
<gene>
    <name evidence="1" type="primary">cmoA</name>
    <name type="ordered locus">PSPTO_4212</name>
</gene>
<protein>
    <recommendedName>
        <fullName evidence="1">Carboxy-S-adenosyl-L-methionine synthase</fullName>
        <shortName evidence="1">Cx-SAM synthase</shortName>
        <ecNumber evidence="1">2.1.3.-</ecNumber>
    </recommendedName>
</protein>
<evidence type="ECO:0000255" key="1">
    <source>
        <dbReference type="HAMAP-Rule" id="MF_01589"/>
    </source>
</evidence>
<organism>
    <name type="scientific">Pseudomonas syringae pv. tomato (strain ATCC BAA-871 / DC3000)</name>
    <dbReference type="NCBI Taxonomy" id="223283"/>
    <lineage>
        <taxon>Bacteria</taxon>
        <taxon>Pseudomonadati</taxon>
        <taxon>Pseudomonadota</taxon>
        <taxon>Gammaproteobacteria</taxon>
        <taxon>Pseudomonadales</taxon>
        <taxon>Pseudomonadaceae</taxon>
        <taxon>Pseudomonas</taxon>
    </lineage>
</organism>
<proteinExistence type="inferred from homology"/>
<accession>Q87XG6</accession>
<feature type="chain" id="PRO_0000314365" description="Carboxy-S-adenosyl-L-methionine synthase">
    <location>
        <begin position="1"/>
        <end position="247"/>
    </location>
</feature>
<feature type="binding site" evidence="1">
    <location>
        <position position="40"/>
    </location>
    <ligand>
        <name>S-adenosyl-L-methionine</name>
        <dbReference type="ChEBI" id="CHEBI:59789"/>
    </ligand>
</feature>
<feature type="binding site" evidence="1">
    <location>
        <begin position="65"/>
        <end position="67"/>
    </location>
    <ligand>
        <name>S-adenosyl-L-methionine</name>
        <dbReference type="ChEBI" id="CHEBI:59789"/>
    </ligand>
</feature>
<feature type="binding site" evidence="1">
    <location>
        <begin position="90"/>
        <end position="91"/>
    </location>
    <ligand>
        <name>S-adenosyl-L-methionine</name>
        <dbReference type="ChEBI" id="CHEBI:59789"/>
    </ligand>
</feature>
<feature type="binding site" evidence="1">
    <location>
        <begin position="122"/>
        <end position="123"/>
    </location>
    <ligand>
        <name>S-adenosyl-L-methionine</name>
        <dbReference type="ChEBI" id="CHEBI:59789"/>
    </ligand>
</feature>
<feature type="binding site" evidence="1">
    <location>
        <position position="137"/>
    </location>
    <ligand>
        <name>S-adenosyl-L-methionine</name>
        <dbReference type="ChEBI" id="CHEBI:59789"/>
    </ligand>
</feature>
<feature type="binding site" evidence="1">
    <location>
        <position position="204"/>
    </location>
    <ligand>
        <name>S-adenosyl-L-methionine</name>
        <dbReference type="ChEBI" id="CHEBI:59789"/>
    </ligand>
</feature>
<reference key="1">
    <citation type="journal article" date="2003" name="Proc. Natl. Acad. Sci. U.S.A.">
        <title>The complete genome sequence of the Arabidopsis and tomato pathogen Pseudomonas syringae pv. tomato DC3000.</title>
        <authorList>
            <person name="Buell C.R."/>
            <person name="Joardar V."/>
            <person name="Lindeberg M."/>
            <person name="Selengut J."/>
            <person name="Paulsen I.T."/>
            <person name="Gwinn M.L."/>
            <person name="Dodson R.J."/>
            <person name="DeBoy R.T."/>
            <person name="Durkin A.S."/>
            <person name="Kolonay J.F."/>
            <person name="Madupu R."/>
            <person name="Daugherty S.C."/>
            <person name="Brinkac L.M."/>
            <person name="Beanan M.J."/>
            <person name="Haft D.H."/>
            <person name="Nelson W.C."/>
            <person name="Davidsen T.M."/>
            <person name="Zafar N."/>
            <person name="Zhou L."/>
            <person name="Liu J."/>
            <person name="Yuan Q."/>
            <person name="Khouri H.M."/>
            <person name="Fedorova N.B."/>
            <person name="Tran B."/>
            <person name="Russell D."/>
            <person name="Berry K.J."/>
            <person name="Utterback T.R."/>
            <person name="Van Aken S.E."/>
            <person name="Feldblyum T.V."/>
            <person name="D'Ascenzo M."/>
            <person name="Deng W.-L."/>
            <person name="Ramos A.R."/>
            <person name="Alfano J.R."/>
            <person name="Cartinhour S."/>
            <person name="Chatterjee A.K."/>
            <person name="Delaney T.P."/>
            <person name="Lazarowitz S.G."/>
            <person name="Martin G.B."/>
            <person name="Schneider D.J."/>
            <person name="Tang X."/>
            <person name="Bender C.L."/>
            <person name="White O."/>
            <person name="Fraser C.M."/>
            <person name="Collmer A."/>
        </authorList>
    </citation>
    <scope>NUCLEOTIDE SEQUENCE [LARGE SCALE GENOMIC DNA]</scope>
    <source>
        <strain>ATCC BAA-871 / DC3000</strain>
    </source>
</reference>